<evidence type="ECO:0000250" key="1"/>
<evidence type="ECO:0000250" key="2">
    <source>
        <dbReference type="UniProtKB" id="P03901"/>
    </source>
</evidence>
<evidence type="ECO:0000255" key="3"/>
<evidence type="ECO:0000305" key="4"/>
<proteinExistence type="inferred from homology"/>
<geneLocation type="mitochondrion"/>
<comment type="function">
    <text evidence="2">Core subunit of the mitochondrial membrane respiratory chain NADH dehydrogenase (Complex I) which catalyzes electron transfer from NADH through the respiratory chain, using ubiquinone as an electron acceptor. Part of the enzyme membrane arm which is embedded in the lipid bilayer and involved in proton translocation.</text>
</comment>
<comment type="catalytic activity">
    <reaction evidence="2">
        <text>a ubiquinone + NADH + 5 H(+)(in) = a ubiquinol + NAD(+) + 4 H(+)(out)</text>
        <dbReference type="Rhea" id="RHEA:29091"/>
        <dbReference type="Rhea" id="RHEA-COMP:9565"/>
        <dbReference type="Rhea" id="RHEA-COMP:9566"/>
        <dbReference type="ChEBI" id="CHEBI:15378"/>
        <dbReference type="ChEBI" id="CHEBI:16389"/>
        <dbReference type="ChEBI" id="CHEBI:17976"/>
        <dbReference type="ChEBI" id="CHEBI:57540"/>
        <dbReference type="ChEBI" id="CHEBI:57945"/>
        <dbReference type="EC" id="7.1.1.2"/>
    </reaction>
    <physiologicalReaction direction="left-to-right" evidence="2">
        <dbReference type="Rhea" id="RHEA:29092"/>
    </physiologicalReaction>
</comment>
<comment type="subcellular location">
    <subcellularLocation>
        <location evidence="1">Mitochondrion membrane</location>
        <topology evidence="1">Multi-pass membrane protein</topology>
    </subcellularLocation>
</comment>
<comment type="similarity">
    <text evidence="4">Belongs to the complex I subunit 4L family.</text>
</comment>
<sequence>MTPVHFSFTSAFILGLMGLAFHRTHLLSALLCLEGMMLSLFIALSLWALQMEATGYSVAPMLLLAFSACEASAGLA</sequence>
<feature type="chain" id="PRO_0000118458" description="NADH-ubiquinone oxidoreductase chain 4L">
    <location>
        <begin position="1"/>
        <end position="76" status="greater than"/>
    </location>
</feature>
<feature type="transmembrane region" description="Helical" evidence="3">
    <location>
        <begin position="1"/>
        <end position="21"/>
    </location>
</feature>
<feature type="transmembrane region" description="Helical" evidence="3">
    <location>
        <begin position="29"/>
        <end position="49"/>
    </location>
</feature>
<feature type="transmembrane region" description="Helical" evidence="3">
    <location>
        <begin position="56"/>
        <end position="76"/>
    </location>
</feature>
<feature type="non-terminal residue">
    <location>
        <position position="76"/>
    </location>
</feature>
<accession>Q37131</accession>
<gene>
    <name type="primary">MT-ND4L</name>
    <name type="synonym">MTND4L</name>
    <name type="synonym">NADH4L</name>
    <name type="synonym">ND4L</name>
</gene>
<organism>
    <name type="scientific">Oncorhynchus masou</name>
    <name type="common">Cherry salmon</name>
    <name type="synonym">Masu salmon</name>
    <dbReference type="NCBI Taxonomy" id="8020"/>
    <lineage>
        <taxon>Eukaryota</taxon>
        <taxon>Metazoa</taxon>
        <taxon>Chordata</taxon>
        <taxon>Craniata</taxon>
        <taxon>Vertebrata</taxon>
        <taxon>Euteleostomi</taxon>
        <taxon>Actinopterygii</taxon>
        <taxon>Neopterygii</taxon>
        <taxon>Teleostei</taxon>
        <taxon>Protacanthopterygii</taxon>
        <taxon>Salmoniformes</taxon>
        <taxon>Salmonidae</taxon>
        <taxon>Salmoninae</taxon>
        <taxon>Oncorhynchus</taxon>
    </lineage>
</organism>
<reference key="1">
    <citation type="journal article" date="1996" name="Zool. Sci.">
        <title>Genetic relationship among three subspecies of Oncorhynchus masou determined by mitochondrial DNA sequence analysis.</title>
        <authorList>
            <person name="Oohara I."/>
            <person name="Okazaki T."/>
        </authorList>
    </citation>
    <scope>NUCLEOTIDE SEQUENCE [GENOMIC DNA]</scope>
    <source>
        <strain>Nagara river / Japan</strain>
    </source>
</reference>
<dbReference type="EC" id="7.1.1.2"/>
<dbReference type="EMBL" id="D63410">
    <property type="protein sequence ID" value="BAA09713.1"/>
    <property type="molecule type" value="Genomic_DNA"/>
</dbReference>
<dbReference type="EMBL" id="D63335">
    <property type="protein sequence ID" value="BAA09651.1"/>
    <property type="molecule type" value="Genomic_DNA"/>
</dbReference>
<dbReference type="EMBL" id="D63336">
    <property type="protein sequence ID" value="BAA09655.1"/>
    <property type="molecule type" value="Genomic_DNA"/>
</dbReference>
<dbReference type="SMR" id="Q37131"/>
<dbReference type="GO" id="GO:0031966">
    <property type="term" value="C:mitochondrial membrane"/>
    <property type="evidence" value="ECO:0007669"/>
    <property type="project" value="UniProtKB-SubCell"/>
</dbReference>
<dbReference type="GO" id="GO:0045271">
    <property type="term" value="C:respiratory chain complex I"/>
    <property type="evidence" value="ECO:0000250"/>
    <property type="project" value="UniProtKB"/>
</dbReference>
<dbReference type="GO" id="GO:0008137">
    <property type="term" value="F:NADH dehydrogenase (ubiquinone) activity"/>
    <property type="evidence" value="ECO:0000250"/>
    <property type="project" value="UniProtKB"/>
</dbReference>
<dbReference type="Gene3D" id="1.10.287.3510">
    <property type="match status" value="1"/>
</dbReference>
<dbReference type="InterPro" id="IPR039428">
    <property type="entry name" value="NUOK/Mnh_C1-like"/>
</dbReference>
<dbReference type="Pfam" id="PF00420">
    <property type="entry name" value="Oxidored_q2"/>
    <property type="match status" value="1"/>
</dbReference>
<keyword id="KW-0249">Electron transport</keyword>
<keyword id="KW-0472">Membrane</keyword>
<keyword id="KW-0496">Mitochondrion</keyword>
<keyword id="KW-0520">NAD</keyword>
<keyword id="KW-0679">Respiratory chain</keyword>
<keyword id="KW-1278">Translocase</keyword>
<keyword id="KW-0812">Transmembrane</keyword>
<keyword id="KW-1133">Transmembrane helix</keyword>
<keyword id="KW-0813">Transport</keyword>
<keyword id="KW-0830">Ubiquinone</keyword>
<name>NU4LM_ONCMA</name>
<protein>
    <recommendedName>
        <fullName>NADH-ubiquinone oxidoreductase chain 4L</fullName>
        <ecNumber>7.1.1.2</ecNumber>
    </recommendedName>
    <alternativeName>
        <fullName>NADH dehydrogenase subunit 4L</fullName>
    </alternativeName>
</protein>